<gene>
    <name evidence="6 10" type="primary">Slc25a32</name>
    <name type="synonym">Mftc</name>
</gene>
<evidence type="ECO:0000255" key="1"/>
<evidence type="ECO:0000255" key="2">
    <source>
        <dbReference type="PROSITE-ProRule" id="PRU00282"/>
    </source>
</evidence>
<evidence type="ECO:0000269" key="3">
    <source>
    </source>
</evidence>
<evidence type="ECO:0000269" key="4">
    <source>
    </source>
</evidence>
<evidence type="ECO:0000269" key="5">
    <source>
    </source>
</evidence>
<evidence type="ECO:0000303" key="6">
    <source>
    </source>
</evidence>
<evidence type="ECO:0000305" key="7"/>
<evidence type="ECO:0000305" key="8">
    <source>
    </source>
</evidence>
<evidence type="ECO:0000305" key="9">
    <source>
    </source>
</evidence>
<evidence type="ECO:0000312" key="10">
    <source>
        <dbReference type="MGI" id="MGI:1917156"/>
    </source>
</evidence>
<feature type="chain" id="PRO_0000090643" description="Solute carrier family 25 member 32">
    <location>
        <begin position="1"/>
        <end position="316"/>
    </location>
</feature>
<feature type="transmembrane region" description="Helical; Name=1" evidence="1">
    <location>
        <begin position="26"/>
        <end position="46"/>
    </location>
</feature>
<feature type="transmembrane region" description="Helical; Name=2" evidence="1">
    <location>
        <begin position="89"/>
        <end position="106"/>
    </location>
</feature>
<feature type="transmembrane region" description="Helical; Name=3" evidence="1">
    <location>
        <begin position="123"/>
        <end position="143"/>
    </location>
</feature>
<feature type="transmembrane region" description="Helical; Name=4" evidence="1">
    <location>
        <begin position="185"/>
        <end position="203"/>
    </location>
</feature>
<feature type="transmembrane region" description="Helical; Name=5" evidence="1">
    <location>
        <begin position="227"/>
        <end position="243"/>
    </location>
</feature>
<feature type="transmembrane region" description="Helical; Name=6" evidence="1">
    <location>
        <begin position="281"/>
        <end position="300"/>
    </location>
</feature>
<feature type="repeat" description="Solcar 1" evidence="2">
    <location>
        <begin position="20"/>
        <end position="109"/>
    </location>
</feature>
<feature type="repeat" description="Solcar 2" evidence="2">
    <location>
        <begin position="118"/>
        <end position="209"/>
    </location>
</feature>
<feature type="repeat" description="Solcar 3" evidence="2">
    <location>
        <begin position="222"/>
        <end position="306"/>
    </location>
</feature>
<dbReference type="EMBL" id="AK031187">
    <property type="protein sequence ID" value="BAC27295.1"/>
    <property type="molecule type" value="mRNA"/>
</dbReference>
<dbReference type="EMBL" id="AK167501">
    <property type="protein sequence ID" value="BAE39577.1"/>
    <property type="molecule type" value="mRNA"/>
</dbReference>
<dbReference type="EMBL" id="AK170643">
    <property type="protein sequence ID" value="BAE41931.1"/>
    <property type="molecule type" value="mRNA"/>
</dbReference>
<dbReference type="EMBL" id="AK172029">
    <property type="protein sequence ID" value="BAE42785.1"/>
    <property type="molecule type" value="mRNA"/>
</dbReference>
<dbReference type="CCDS" id="CCDS27443.1"/>
<dbReference type="RefSeq" id="NP_765990.2">
    <property type="nucleotide sequence ID" value="NM_172402.3"/>
</dbReference>
<dbReference type="SMR" id="Q8BMG8"/>
<dbReference type="FunCoup" id="Q8BMG8">
    <property type="interactions" value="3645"/>
</dbReference>
<dbReference type="STRING" id="10090.ENSMUSP00000022908"/>
<dbReference type="GlyGen" id="Q8BMG8">
    <property type="glycosylation" value="1 site"/>
</dbReference>
<dbReference type="iPTMnet" id="Q8BMG8"/>
<dbReference type="PhosphoSitePlus" id="Q8BMG8"/>
<dbReference type="PaxDb" id="10090-ENSMUSP00000022908"/>
<dbReference type="PeptideAtlas" id="Q8BMG8"/>
<dbReference type="ProteomicsDB" id="295895"/>
<dbReference type="Pumba" id="Q8BMG8"/>
<dbReference type="DNASU" id="69906"/>
<dbReference type="Ensembl" id="ENSMUST00000022908.10">
    <property type="protein sequence ID" value="ENSMUSP00000022908.9"/>
    <property type="gene ID" value="ENSMUSG00000022299.10"/>
</dbReference>
<dbReference type="GeneID" id="69906"/>
<dbReference type="KEGG" id="mmu:69906"/>
<dbReference type="UCSC" id="uc007vob.2">
    <property type="organism name" value="mouse"/>
</dbReference>
<dbReference type="AGR" id="MGI:1917156"/>
<dbReference type="CTD" id="81034"/>
<dbReference type="MGI" id="MGI:1917156">
    <property type="gene designation" value="Slc25a32"/>
</dbReference>
<dbReference type="VEuPathDB" id="HostDB:ENSMUSG00000022299"/>
<dbReference type="eggNOG" id="KOG0764">
    <property type="taxonomic scope" value="Eukaryota"/>
</dbReference>
<dbReference type="GeneTree" id="ENSGT00920000149145"/>
<dbReference type="HOGENOM" id="CLU_015166_6_4_1"/>
<dbReference type="InParanoid" id="Q8BMG8"/>
<dbReference type="OMA" id="TTVWKHE"/>
<dbReference type="OrthoDB" id="428293at2759"/>
<dbReference type="PhylomeDB" id="Q8BMG8"/>
<dbReference type="TreeFam" id="TF314217"/>
<dbReference type="Reactome" id="R-MMU-196757">
    <property type="pathway name" value="Metabolism of folate and pterines"/>
</dbReference>
<dbReference type="BioGRID-ORCS" id="69906">
    <property type="hits" value="13 hits in 75 CRISPR screens"/>
</dbReference>
<dbReference type="ChiTaRS" id="Slc25a32">
    <property type="organism name" value="mouse"/>
</dbReference>
<dbReference type="PRO" id="PR:Q8BMG8"/>
<dbReference type="Proteomes" id="UP000000589">
    <property type="component" value="Chromosome 15"/>
</dbReference>
<dbReference type="RNAct" id="Q8BMG8">
    <property type="molecule type" value="protein"/>
</dbReference>
<dbReference type="Bgee" id="ENSMUSG00000022299">
    <property type="expression patterns" value="Expressed in secondary oocyte and 65 other cell types or tissues"/>
</dbReference>
<dbReference type="ExpressionAtlas" id="Q8BMG8">
    <property type="expression patterns" value="baseline and differential"/>
</dbReference>
<dbReference type="GO" id="GO:0005743">
    <property type="term" value="C:mitochondrial inner membrane"/>
    <property type="evidence" value="ECO:0000250"/>
    <property type="project" value="UniProtKB"/>
</dbReference>
<dbReference type="GO" id="GO:0005739">
    <property type="term" value="C:mitochondrion"/>
    <property type="evidence" value="ECO:0000314"/>
    <property type="project" value="UniProtKB"/>
</dbReference>
<dbReference type="GO" id="GO:0015230">
    <property type="term" value="F:FAD transmembrane transporter activity"/>
    <property type="evidence" value="ECO:0000315"/>
    <property type="project" value="UniProtKB"/>
</dbReference>
<dbReference type="GO" id="GO:0008517">
    <property type="term" value="F:folic acid transmembrane transporter activity"/>
    <property type="evidence" value="ECO:0000266"/>
    <property type="project" value="MGI"/>
</dbReference>
<dbReference type="GO" id="GO:1904947">
    <property type="term" value="P:folate import into mitochondrion"/>
    <property type="evidence" value="ECO:0000250"/>
    <property type="project" value="UniProtKB"/>
</dbReference>
<dbReference type="GO" id="GO:1990548">
    <property type="term" value="P:mitochondrial FAD transmembrane transport"/>
    <property type="evidence" value="ECO:0000315"/>
    <property type="project" value="UniProtKB"/>
</dbReference>
<dbReference type="FunFam" id="1.50.40.10:FF:000025">
    <property type="entry name" value="mitochondrial folate transporter/carrier"/>
    <property type="match status" value="1"/>
</dbReference>
<dbReference type="Gene3D" id="1.50.40.10">
    <property type="entry name" value="Mitochondrial carrier domain"/>
    <property type="match status" value="1"/>
</dbReference>
<dbReference type="InterPro" id="IPR018108">
    <property type="entry name" value="Mitochondrial_sb/sol_carrier"/>
</dbReference>
<dbReference type="InterPro" id="IPR023395">
    <property type="entry name" value="Mt_carrier_dom_sf"/>
</dbReference>
<dbReference type="InterPro" id="IPR044712">
    <property type="entry name" value="SLC25A32-like"/>
</dbReference>
<dbReference type="PANTHER" id="PTHR45683">
    <property type="entry name" value="MITOCHONDRIAL NICOTINAMIDE ADENINE DINUCLEOTIDE TRANSPORTER 1-RELATED-RELATED"/>
    <property type="match status" value="1"/>
</dbReference>
<dbReference type="Pfam" id="PF00153">
    <property type="entry name" value="Mito_carr"/>
    <property type="match status" value="3"/>
</dbReference>
<dbReference type="SUPFAM" id="SSF103506">
    <property type="entry name" value="Mitochondrial carrier"/>
    <property type="match status" value="1"/>
</dbReference>
<dbReference type="PROSITE" id="PS50920">
    <property type="entry name" value="SOLCAR"/>
    <property type="match status" value="3"/>
</dbReference>
<protein>
    <recommendedName>
        <fullName>Solute carrier family 25 member 32</fullName>
    </recommendedName>
    <alternativeName>
        <fullName evidence="9">Mitochondrial FAD transporter</fullName>
    </alternativeName>
</protein>
<accession>Q8BMG8</accession>
<accession>Q3TCM5</accession>
<sequence length="316" mass="35049">MTGQGQSAAGSAAWSAVFRHVRYENLVAGVSGGVLSNLALHPLDLVKIRFAVSDGLEVRPKYKGILHCLATIWKVDGLRGLYQGVTPNVWGAGLSWGLYFFFYNAIKSYKTEGRAEQLEPLEYLVSAAEAGAMTLCITNPLWVTKTRLMLQYGGVASPSQRQYKGMFDALVKIYKYEGVRGLYKGFVPGLFGTSHGALQFMAYELLKLKYNKHINRLPEAQLSTAEYISVAALSKIFAVAATYPYQVVRARLQDQHVSYGGVTDVITKTWRKEGIGGFYKGIAPNLIRVTPACCITFVVYENVSHFLYDLREKKVS</sequence>
<reference key="1">
    <citation type="journal article" date="2005" name="Science">
        <title>The transcriptional landscape of the mammalian genome.</title>
        <authorList>
            <person name="Carninci P."/>
            <person name="Kasukawa T."/>
            <person name="Katayama S."/>
            <person name="Gough J."/>
            <person name="Frith M.C."/>
            <person name="Maeda N."/>
            <person name="Oyama R."/>
            <person name="Ravasi T."/>
            <person name="Lenhard B."/>
            <person name="Wells C."/>
            <person name="Kodzius R."/>
            <person name="Shimokawa K."/>
            <person name="Bajic V.B."/>
            <person name="Brenner S.E."/>
            <person name="Batalov S."/>
            <person name="Forrest A.R."/>
            <person name="Zavolan M."/>
            <person name="Davis M.J."/>
            <person name="Wilming L.G."/>
            <person name="Aidinis V."/>
            <person name="Allen J.E."/>
            <person name="Ambesi-Impiombato A."/>
            <person name="Apweiler R."/>
            <person name="Aturaliya R.N."/>
            <person name="Bailey T.L."/>
            <person name="Bansal M."/>
            <person name="Baxter L."/>
            <person name="Beisel K.W."/>
            <person name="Bersano T."/>
            <person name="Bono H."/>
            <person name="Chalk A.M."/>
            <person name="Chiu K.P."/>
            <person name="Choudhary V."/>
            <person name="Christoffels A."/>
            <person name="Clutterbuck D.R."/>
            <person name="Crowe M.L."/>
            <person name="Dalla E."/>
            <person name="Dalrymple B.P."/>
            <person name="de Bono B."/>
            <person name="Della Gatta G."/>
            <person name="di Bernardo D."/>
            <person name="Down T."/>
            <person name="Engstrom P."/>
            <person name="Fagiolini M."/>
            <person name="Faulkner G."/>
            <person name="Fletcher C.F."/>
            <person name="Fukushima T."/>
            <person name="Furuno M."/>
            <person name="Futaki S."/>
            <person name="Gariboldi M."/>
            <person name="Georgii-Hemming P."/>
            <person name="Gingeras T.R."/>
            <person name="Gojobori T."/>
            <person name="Green R.E."/>
            <person name="Gustincich S."/>
            <person name="Harbers M."/>
            <person name="Hayashi Y."/>
            <person name="Hensch T.K."/>
            <person name="Hirokawa N."/>
            <person name="Hill D."/>
            <person name="Huminiecki L."/>
            <person name="Iacono M."/>
            <person name="Ikeo K."/>
            <person name="Iwama A."/>
            <person name="Ishikawa T."/>
            <person name="Jakt M."/>
            <person name="Kanapin A."/>
            <person name="Katoh M."/>
            <person name="Kawasawa Y."/>
            <person name="Kelso J."/>
            <person name="Kitamura H."/>
            <person name="Kitano H."/>
            <person name="Kollias G."/>
            <person name="Krishnan S.P."/>
            <person name="Kruger A."/>
            <person name="Kummerfeld S.K."/>
            <person name="Kurochkin I.V."/>
            <person name="Lareau L.F."/>
            <person name="Lazarevic D."/>
            <person name="Lipovich L."/>
            <person name="Liu J."/>
            <person name="Liuni S."/>
            <person name="McWilliam S."/>
            <person name="Madan Babu M."/>
            <person name="Madera M."/>
            <person name="Marchionni L."/>
            <person name="Matsuda H."/>
            <person name="Matsuzawa S."/>
            <person name="Miki H."/>
            <person name="Mignone F."/>
            <person name="Miyake S."/>
            <person name="Morris K."/>
            <person name="Mottagui-Tabar S."/>
            <person name="Mulder N."/>
            <person name="Nakano N."/>
            <person name="Nakauchi H."/>
            <person name="Ng P."/>
            <person name="Nilsson R."/>
            <person name="Nishiguchi S."/>
            <person name="Nishikawa S."/>
            <person name="Nori F."/>
            <person name="Ohara O."/>
            <person name="Okazaki Y."/>
            <person name="Orlando V."/>
            <person name="Pang K.C."/>
            <person name="Pavan W.J."/>
            <person name="Pavesi G."/>
            <person name="Pesole G."/>
            <person name="Petrovsky N."/>
            <person name="Piazza S."/>
            <person name="Reed J."/>
            <person name="Reid J.F."/>
            <person name="Ring B.Z."/>
            <person name="Ringwald M."/>
            <person name="Rost B."/>
            <person name="Ruan Y."/>
            <person name="Salzberg S.L."/>
            <person name="Sandelin A."/>
            <person name="Schneider C."/>
            <person name="Schoenbach C."/>
            <person name="Sekiguchi K."/>
            <person name="Semple C.A."/>
            <person name="Seno S."/>
            <person name="Sessa L."/>
            <person name="Sheng Y."/>
            <person name="Shibata Y."/>
            <person name="Shimada H."/>
            <person name="Shimada K."/>
            <person name="Silva D."/>
            <person name="Sinclair B."/>
            <person name="Sperling S."/>
            <person name="Stupka E."/>
            <person name="Sugiura K."/>
            <person name="Sultana R."/>
            <person name="Takenaka Y."/>
            <person name="Taki K."/>
            <person name="Tammoja K."/>
            <person name="Tan S.L."/>
            <person name="Tang S."/>
            <person name="Taylor M.S."/>
            <person name="Tegner J."/>
            <person name="Teichmann S.A."/>
            <person name="Ueda H.R."/>
            <person name="van Nimwegen E."/>
            <person name="Verardo R."/>
            <person name="Wei C.L."/>
            <person name="Yagi K."/>
            <person name="Yamanishi H."/>
            <person name="Zabarovsky E."/>
            <person name="Zhu S."/>
            <person name="Zimmer A."/>
            <person name="Hide W."/>
            <person name="Bult C."/>
            <person name="Grimmond S.M."/>
            <person name="Teasdale R.D."/>
            <person name="Liu E.T."/>
            <person name="Brusic V."/>
            <person name="Quackenbush J."/>
            <person name="Wahlestedt C."/>
            <person name="Mattick J.S."/>
            <person name="Hume D.A."/>
            <person name="Kai C."/>
            <person name="Sasaki D."/>
            <person name="Tomaru Y."/>
            <person name="Fukuda S."/>
            <person name="Kanamori-Katayama M."/>
            <person name="Suzuki M."/>
            <person name="Aoki J."/>
            <person name="Arakawa T."/>
            <person name="Iida J."/>
            <person name="Imamura K."/>
            <person name="Itoh M."/>
            <person name="Kato T."/>
            <person name="Kawaji H."/>
            <person name="Kawagashira N."/>
            <person name="Kawashima T."/>
            <person name="Kojima M."/>
            <person name="Kondo S."/>
            <person name="Konno H."/>
            <person name="Nakano K."/>
            <person name="Ninomiya N."/>
            <person name="Nishio T."/>
            <person name="Okada M."/>
            <person name="Plessy C."/>
            <person name="Shibata K."/>
            <person name="Shiraki T."/>
            <person name="Suzuki S."/>
            <person name="Tagami M."/>
            <person name="Waki K."/>
            <person name="Watahiki A."/>
            <person name="Okamura-Oho Y."/>
            <person name="Suzuki H."/>
            <person name="Kawai J."/>
            <person name="Hayashizaki Y."/>
        </authorList>
    </citation>
    <scope>NUCLEOTIDE SEQUENCE [LARGE SCALE MRNA]</scope>
    <source>
        <strain>C57BL/6J</strain>
        <strain>NOD</strain>
        <tissue>Forelimb</tissue>
        <tissue>Placenta</tissue>
        <tissue>Spleen</tissue>
    </source>
</reference>
<reference key="2">
    <citation type="journal article" date="2004" name="J. Biol. Chem.">
        <title>A mutation inactivating the mitochondrial inner membrane folate transporter creates a glycine requirement for survival of chinese hamster cells.</title>
        <authorList>
            <person name="McCarthy E.A."/>
            <person name="Titus S.A."/>
            <person name="Taylor S.M."/>
            <person name="Jackson-Cook C."/>
            <person name="Moran R.G."/>
        </authorList>
    </citation>
    <scope>CAUTION</scope>
</reference>
<reference key="3">
    <citation type="journal article" date="2010" name="Cell">
        <title>A tissue-specific atlas of mouse protein phosphorylation and expression.</title>
        <authorList>
            <person name="Huttlin E.L."/>
            <person name="Jedrychowski M.P."/>
            <person name="Elias J.E."/>
            <person name="Goswami T."/>
            <person name="Rad R."/>
            <person name="Beausoleil S.A."/>
            <person name="Villen J."/>
            <person name="Haas W."/>
            <person name="Sowa M.E."/>
            <person name="Gygi S.P."/>
        </authorList>
    </citation>
    <scope>IDENTIFICATION BY MASS SPECTROMETRY [LARGE SCALE ANALYSIS]</scope>
    <source>
        <tissue>Brown adipose tissue</tissue>
        <tissue>Kidney</tissue>
        <tissue>Liver</tissue>
        <tissue>Lung</tissue>
        <tissue>Pancreas</tissue>
        <tissue>Spleen</tissue>
        <tissue>Testis</tissue>
    </source>
</reference>
<reference key="4">
    <citation type="journal article" date="2018" name="Proc. Natl. Acad. Sci. U.S.A.">
        <title>Formate rescues neural tube defects caused by mutations in Slc25a32.</title>
        <authorList>
            <person name="Kim J."/>
            <person name="Lei Y."/>
            <person name="Guo J."/>
            <person name="Kim S.E."/>
            <person name="Wlodarczyk B.J."/>
            <person name="Cabrera R.M."/>
            <person name="Lin Y.L."/>
            <person name="Nilsson T.K."/>
            <person name="Zhang T."/>
            <person name="Ren A."/>
            <person name="Wang L."/>
            <person name="Yuan Z."/>
            <person name="Zheng Y.F."/>
            <person name="Wang H.Y."/>
            <person name="Finnell R.H."/>
        </authorList>
    </citation>
    <scope>FUNCTION</scope>
    <scope>DISRUPTION PHENOTYPE</scope>
    <scope>SUBCELLULAR LOCATION</scope>
</reference>
<reference key="5">
    <citation type="journal article" date="2022" name="Cell. Mol. Life Sci.">
        <title>Mitochondrial FAD shortage in SLC25A32 deficiency affects folate-mediated one-carbon metabolism.</title>
        <authorList>
            <person name="Peng M.Z."/>
            <person name="Shao Y.X."/>
            <person name="Li X.Z."/>
            <person name="Zhang K.D."/>
            <person name="Cai Y.N."/>
            <person name="Lin Y.T."/>
            <person name="Jiang M.Y."/>
            <person name="Liu Z.C."/>
            <person name="Su X.Y."/>
            <person name="Zhang W."/>
            <person name="Jiang X.L."/>
            <person name="Liu L."/>
        </authorList>
    </citation>
    <scope>FUNCTION</scope>
    <scope>TRANSPORTER ACTIVITY</scope>
    <scope>DISRUPTION PHENOTYPE</scope>
    <scope>CAUTION</scope>
</reference>
<keyword id="KW-0472">Membrane</keyword>
<keyword id="KW-0496">Mitochondrion</keyword>
<keyword id="KW-0999">Mitochondrion inner membrane</keyword>
<keyword id="KW-1185">Reference proteome</keyword>
<keyword id="KW-0677">Repeat</keyword>
<keyword id="KW-0812">Transmembrane</keyword>
<keyword id="KW-1133">Transmembrane helix</keyword>
<keyword id="KW-0813">Transport</keyword>
<proteinExistence type="evidence at protein level"/>
<comment type="function">
    <text evidence="4 5">Facilitates flavin adenine dinucleotide (FAD) translocation across the mitochondrial inner membrane into the mitochondrial matrix where it acts as a redox cofactor to assist flavoenzyme activities in fundamental metabolic processes including fatty acid beta-oxidation, amino acid and choline metabolism as well as mitochondrial electron transportation. In particular, provides FAD to DLD dehydrogenase of the glycine cleavage system, part of mitochondrial one-carbon metabolic pathway involved in neural tube closure in early embryogenesis.</text>
</comment>
<comment type="catalytic activity">
    <reaction evidence="5">
        <text>FAD(in) = FAD(out)</text>
        <dbReference type="Rhea" id="RHEA:76535"/>
        <dbReference type="ChEBI" id="CHEBI:57692"/>
    </reaction>
</comment>
<comment type="subcellular location">
    <subcellularLocation>
        <location evidence="8">Mitochondrion inner membrane</location>
        <topology evidence="1">Multi-pass membrane protein</topology>
    </subcellularLocation>
</comment>
<comment type="disruption phenotype">
    <text evidence="5">Embryonic lethal (PubMed:29666258, PubMed:35727412). At 11.5 dpc, the majority of mutant embryos show neural tube defects with exencephaly or craniorachischisis associated with multiple acyl-CoA dehydrogenase deficiency. Neural tube defects can be prevented by formate supplementation in early embryogenesis.</text>
</comment>
<comment type="similarity">
    <text evidence="7">Belongs to the mitochondrial carrier (TC 2.A.29) family.</text>
</comment>
<comment type="caution">
    <text evidence="3 5">Initially postulated to function as a folate transporter based on complementation evidence, but it was latter shown that it rather function as a FAD transporter indirectly affecting folate-mediated one-carbon metabolism in mitochondria.</text>
</comment>
<name>S2532_MOUSE</name>
<organism>
    <name type="scientific">Mus musculus</name>
    <name type="common">Mouse</name>
    <dbReference type="NCBI Taxonomy" id="10090"/>
    <lineage>
        <taxon>Eukaryota</taxon>
        <taxon>Metazoa</taxon>
        <taxon>Chordata</taxon>
        <taxon>Craniata</taxon>
        <taxon>Vertebrata</taxon>
        <taxon>Euteleostomi</taxon>
        <taxon>Mammalia</taxon>
        <taxon>Eutheria</taxon>
        <taxon>Euarchontoglires</taxon>
        <taxon>Glires</taxon>
        <taxon>Rodentia</taxon>
        <taxon>Myomorpha</taxon>
        <taxon>Muroidea</taxon>
        <taxon>Muridae</taxon>
        <taxon>Murinae</taxon>
        <taxon>Mus</taxon>
        <taxon>Mus</taxon>
    </lineage>
</organism>